<organism>
    <name type="scientific">Exiguobacterium sp. (strain ATCC BAA-1283 / AT1b)</name>
    <dbReference type="NCBI Taxonomy" id="360911"/>
    <lineage>
        <taxon>Bacteria</taxon>
        <taxon>Bacillati</taxon>
        <taxon>Bacillota</taxon>
        <taxon>Bacilli</taxon>
        <taxon>Bacillales</taxon>
        <taxon>Bacillales Family XII. Incertae Sedis</taxon>
        <taxon>Exiguobacterium</taxon>
    </lineage>
</organism>
<reference key="1">
    <citation type="journal article" date="2011" name="J. Bacteriol.">
        <title>Complete genome sequence of the Thermophilic Bacterium Exiguobacterium sp. AT1b.</title>
        <authorList>
            <person name="Vishnivetskaya T.A."/>
            <person name="Lucas S."/>
            <person name="Copeland A."/>
            <person name="Lapidus A."/>
            <person name="Glavina del Rio T."/>
            <person name="Dalin E."/>
            <person name="Tice H."/>
            <person name="Bruce D.C."/>
            <person name="Goodwin L.A."/>
            <person name="Pitluck S."/>
            <person name="Saunders E."/>
            <person name="Brettin T."/>
            <person name="Detter C."/>
            <person name="Han C."/>
            <person name="Larimer F."/>
            <person name="Land M.L."/>
            <person name="Hauser L.J."/>
            <person name="Kyrpides N.C."/>
            <person name="Ovchinnikova G."/>
            <person name="Kathariou S."/>
            <person name="Ramaley R.F."/>
            <person name="Rodrigues D.F."/>
            <person name="Hendrix C."/>
            <person name="Richardson P."/>
            <person name="Tiedje J.M."/>
        </authorList>
    </citation>
    <scope>NUCLEOTIDE SEQUENCE [LARGE SCALE GENOMIC DNA]</scope>
    <source>
        <strain>ATCC BAA-1283 / AT1b</strain>
    </source>
</reference>
<feature type="chain" id="PRO_1000204198" description="Probable malate:quinone oxidoreductase">
    <location>
        <begin position="1"/>
        <end position="499"/>
    </location>
</feature>
<dbReference type="EC" id="1.1.5.4" evidence="1"/>
<dbReference type="EMBL" id="CP001615">
    <property type="protein sequence ID" value="ACQ70719.1"/>
    <property type="molecule type" value="Genomic_DNA"/>
</dbReference>
<dbReference type="RefSeq" id="WP_015880278.1">
    <property type="nucleotide sequence ID" value="NC_012673.1"/>
</dbReference>
<dbReference type="SMR" id="C4L056"/>
<dbReference type="STRING" id="360911.EAT1b_1793"/>
<dbReference type="KEGG" id="eat:EAT1b_1793"/>
<dbReference type="eggNOG" id="COG0579">
    <property type="taxonomic scope" value="Bacteria"/>
</dbReference>
<dbReference type="HOGENOM" id="CLU_028151_0_0_9"/>
<dbReference type="OrthoDB" id="9763983at2"/>
<dbReference type="UniPathway" id="UPA00223">
    <property type="reaction ID" value="UER01008"/>
</dbReference>
<dbReference type="Proteomes" id="UP000000716">
    <property type="component" value="Chromosome"/>
</dbReference>
<dbReference type="GO" id="GO:0047545">
    <property type="term" value="F:2-hydroxyglutarate dehydrogenase activity"/>
    <property type="evidence" value="ECO:0007669"/>
    <property type="project" value="TreeGrafter"/>
</dbReference>
<dbReference type="GO" id="GO:0008924">
    <property type="term" value="F:L-malate dehydrogenase (quinone) activity"/>
    <property type="evidence" value="ECO:0007669"/>
    <property type="project" value="UniProtKB-UniRule"/>
</dbReference>
<dbReference type="GO" id="GO:0006099">
    <property type="term" value="P:tricarboxylic acid cycle"/>
    <property type="evidence" value="ECO:0007669"/>
    <property type="project" value="UniProtKB-UniRule"/>
</dbReference>
<dbReference type="HAMAP" id="MF_00212">
    <property type="entry name" value="MQO"/>
    <property type="match status" value="1"/>
</dbReference>
<dbReference type="InterPro" id="IPR036188">
    <property type="entry name" value="FAD/NAD-bd_sf"/>
</dbReference>
<dbReference type="InterPro" id="IPR006231">
    <property type="entry name" value="MQO"/>
</dbReference>
<dbReference type="NCBIfam" id="TIGR01320">
    <property type="entry name" value="mal_quin_oxido"/>
    <property type="match status" value="1"/>
</dbReference>
<dbReference type="NCBIfam" id="NF003603">
    <property type="entry name" value="PRK05257.1-1"/>
    <property type="match status" value="1"/>
</dbReference>
<dbReference type="NCBIfam" id="NF003604">
    <property type="entry name" value="PRK05257.1-3"/>
    <property type="match status" value="1"/>
</dbReference>
<dbReference type="NCBIfam" id="NF003605">
    <property type="entry name" value="PRK05257.1-4"/>
    <property type="match status" value="1"/>
</dbReference>
<dbReference type="NCBIfam" id="NF003606">
    <property type="entry name" value="PRK05257.2-1"/>
    <property type="match status" value="1"/>
</dbReference>
<dbReference type="NCBIfam" id="NF003608">
    <property type="entry name" value="PRK05257.2-4"/>
    <property type="match status" value="1"/>
</dbReference>
<dbReference type="NCBIfam" id="NF003610">
    <property type="entry name" value="PRK05257.3-1"/>
    <property type="match status" value="1"/>
</dbReference>
<dbReference type="NCBIfam" id="NF003611">
    <property type="entry name" value="PRK05257.3-2"/>
    <property type="match status" value="1"/>
</dbReference>
<dbReference type="NCBIfam" id="NF009875">
    <property type="entry name" value="PRK13339.1"/>
    <property type="match status" value="1"/>
</dbReference>
<dbReference type="PANTHER" id="PTHR43104">
    <property type="entry name" value="L-2-HYDROXYGLUTARATE DEHYDROGENASE, MITOCHONDRIAL"/>
    <property type="match status" value="1"/>
</dbReference>
<dbReference type="PANTHER" id="PTHR43104:SF2">
    <property type="entry name" value="L-2-HYDROXYGLUTARATE DEHYDROGENASE, MITOCHONDRIAL"/>
    <property type="match status" value="1"/>
</dbReference>
<dbReference type="Pfam" id="PF06039">
    <property type="entry name" value="Mqo"/>
    <property type="match status" value="1"/>
</dbReference>
<dbReference type="SUPFAM" id="SSF51905">
    <property type="entry name" value="FAD/NAD(P)-binding domain"/>
    <property type="match status" value="1"/>
</dbReference>
<gene>
    <name evidence="1" type="primary">mqo</name>
    <name type="ordered locus">EAT1b_1793</name>
</gene>
<sequence length="499" mass="54959">MSSTQTRTDVILIGAGIMSATLGSLFKELVPEWNIKVFEKLDAAGEESSNEWNNAGTGHAALCELNYTTENADGTIDISKAVNVNEQFQISRQFWAHLVKQGLIENPGAFIRSIPHMSMVQGEKNVDFLKRRLEALTTNPLFEGMVLSDDPSQLQEWIPLIMDGRTSDEPIAATKIDSGTDVNFGALTRMLFDHLTSNGVELNYGHSVEDVKRLENGHWEVKVKDMSQNTIETHTAPFLFIGGGGGSLPLLQKTGIPESKQIGGFPVSGLFLVCKNREVIEQHHAKVYGKAKVGAPPMSVPHLDTRFIDGRKELLFGPFAGFTPKFLKTGSNLDLIRSVKPNNVITMLAAGAKEMPLTKYLIEQVLLSHDKRMDELREFIPNAKNEDWEIVVAGQRVQVIKDTPQGKGTLQFGTEVVSSEDGSVAALLGASPGASTAVHVMLKVLEQCFPQHLPEWEPKIKEMVPSYGLKLSEHPDLFKTIHESTAITLGLEEKDMVHN</sequence>
<accession>C4L056</accession>
<proteinExistence type="inferred from homology"/>
<name>MQO_EXISA</name>
<keyword id="KW-0274">FAD</keyword>
<keyword id="KW-0285">Flavoprotein</keyword>
<keyword id="KW-0560">Oxidoreductase</keyword>
<keyword id="KW-0816">Tricarboxylic acid cycle</keyword>
<protein>
    <recommendedName>
        <fullName evidence="1">Probable malate:quinone oxidoreductase</fullName>
        <ecNumber evidence="1">1.1.5.4</ecNumber>
    </recommendedName>
    <alternativeName>
        <fullName evidence="1">MQO</fullName>
    </alternativeName>
    <alternativeName>
        <fullName evidence="1">Malate dehydrogenase [quinone]</fullName>
    </alternativeName>
</protein>
<comment type="catalytic activity">
    <reaction evidence="1">
        <text>(S)-malate + a quinone = a quinol + oxaloacetate</text>
        <dbReference type="Rhea" id="RHEA:46012"/>
        <dbReference type="ChEBI" id="CHEBI:15589"/>
        <dbReference type="ChEBI" id="CHEBI:16452"/>
        <dbReference type="ChEBI" id="CHEBI:24646"/>
        <dbReference type="ChEBI" id="CHEBI:132124"/>
        <dbReference type="EC" id="1.1.5.4"/>
    </reaction>
</comment>
<comment type="cofactor">
    <cofactor evidence="1">
        <name>FAD</name>
        <dbReference type="ChEBI" id="CHEBI:57692"/>
    </cofactor>
</comment>
<comment type="pathway">
    <text evidence="1">Carbohydrate metabolism; tricarboxylic acid cycle; oxaloacetate from (S)-malate (quinone route): step 1/1.</text>
</comment>
<comment type="similarity">
    <text evidence="1">Belongs to the MQO family.</text>
</comment>
<evidence type="ECO:0000255" key="1">
    <source>
        <dbReference type="HAMAP-Rule" id="MF_00212"/>
    </source>
</evidence>